<organism>
    <name type="scientific">Pseudomonas syringae pv. tomato (strain ATCC BAA-871 / DC3000)</name>
    <dbReference type="NCBI Taxonomy" id="223283"/>
    <lineage>
        <taxon>Bacteria</taxon>
        <taxon>Pseudomonadati</taxon>
        <taxon>Pseudomonadota</taxon>
        <taxon>Gammaproteobacteria</taxon>
        <taxon>Pseudomonadales</taxon>
        <taxon>Pseudomonadaceae</taxon>
        <taxon>Pseudomonas</taxon>
    </lineage>
</organism>
<gene>
    <name evidence="1" type="primary">mraZ</name>
    <name type="ordered locus">PSPTO_4417</name>
</gene>
<dbReference type="EMBL" id="AE016853">
    <property type="protein sequence ID" value="AAO57866.1"/>
    <property type="molecule type" value="Genomic_DNA"/>
</dbReference>
<dbReference type="RefSeq" id="NP_794171.1">
    <property type="nucleotide sequence ID" value="NC_004578.1"/>
</dbReference>
<dbReference type="RefSeq" id="WP_005620303.1">
    <property type="nucleotide sequence ID" value="NC_004578.1"/>
</dbReference>
<dbReference type="SMR" id="Q87WX6"/>
<dbReference type="STRING" id="223283.PSPTO_4417"/>
<dbReference type="GeneID" id="73737047"/>
<dbReference type="KEGG" id="pst:PSPTO_4417"/>
<dbReference type="PATRIC" id="fig|223283.9.peg.4532"/>
<dbReference type="eggNOG" id="COG2001">
    <property type="taxonomic scope" value="Bacteria"/>
</dbReference>
<dbReference type="HOGENOM" id="CLU_107907_2_0_6"/>
<dbReference type="OrthoDB" id="9807753at2"/>
<dbReference type="PhylomeDB" id="Q87WX6"/>
<dbReference type="Proteomes" id="UP000002515">
    <property type="component" value="Chromosome"/>
</dbReference>
<dbReference type="GO" id="GO:0005737">
    <property type="term" value="C:cytoplasm"/>
    <property type="evidence" value="ECO:0007669"/>
    <property type="project" value="UniProtKB-UniRule"/>
</dbReference>
<dbReference type="GO" id="GO:0009295">
    <property type="term" value="C:nucleoid"/>
    <property type="evidence" value="ECO:0007669"/>
    <property type="project" value="UniProtKB-SubCell"/>
</dbReference>
<dbReference type="GO" id="GO:0003700">
    <property type="term" value="F:DNA-binding transcription factor activity"/>
    <property type="evidence" value="ECO:0007669"/>
    <property type="project" value="UniProtKB-UniRule"/>
</dbReference>
<dbReference type="GO" id="GO:0000976">
    <property type="term" value="F:transcription cis-regulatory region binding"/>
    <property type="evidence" value="ECO:0007669"/>
    <property type="project" value="TreeGrafter"/>
</dbReference>
<dbReference type="GO" id="GO:2000143">
    <property type="term" value="P:negative regulation of DNA-templated transcription initiation"/>
    <property type="evidence" value="ECO:0007669"/>
    <property type="project" value="TreeGrafter"/>
</dbReference>
<dbReference type="CDD" id="cd16321">
    <property type="entry name" value="MraZ_C"/>
    <property type="match status" value="1"/>
</dbReference>
<dbReference type="CDD" id="cd16320">
    <property type="entry name" value="MraZ_N"/>
    <property type="match status" value="1"/>
</dbReference>
<dbReference type="FunFam" id="3.40.1550.20:FF:000001">
    <property type="entry name" value="Transcriptional regulator MraZ"/>
    <property type="match status" value="1"/>
</dbReference>
<dbReference type="Gene3D" id="3.40.1550.20">
    <property type="entry name" value="Transcriptional regulator MraZ domain"/>
    <property type="match status" value="1"/>
</dbReference>
<dbReference type="HAMAP" id="MF_01008">
    <property type="entry name" value="MraZ"/>
    <property type="match status" value="1"/>
</dbReference>
<dbReference type="InterPro" id="IPR003444">
    <property type="entry name" value="MraZ"/>
</dbReference>
<dbReference type="InterPro" id="IPR035644">
    <property type="entry name" value="MraZ_C"/>
</dbReference>
<dbReference type="InterPro" id="IPR020603">
    <property type="entry name" value="MraZ_dom"/>
</dbReference>
<dbReference type="InterPro" id="IPR035642">
    <property type="entry name" value="MraZ_N"/>
</dbReference>
<dbReference type="InterPro" id="IPR038619">
    <property type="entry name" value="MraZ_sf"/>
</dbReference>
<dbReference type="InterPro" id="IPR007159">
    <property type="entry name" value="SpoVT-AbrB_dom"/>
</dbReference>
<dbReference type="InterPro" id="IPR037914">
    <property type="entry name" value="SpoVT-AbrB_sf"/>
</dbReference>
<dbReference type="NCBIfam" id="TIGR00242">
    <property type="entry name" value="division/cell wall cluster transcriptional repressor MraZ"/>
    <property type="match status" value="1"/>
</dbReference>
<dbReference type="PANTHER" id="PTHR34701">
    <property type="entry name" value="TRANSCRIPTIONAL REGULATOR MRAZ"/>
    <property type="match status" value="1"/>
</dbReference>
<dbReference type="PANTHER" id="PTHR34701:SF1">
    <property type="entry name" value="TRANSCRIPTIONAL REGULATOR MRAZ"/>
    <property type="match status" value="1"/>
</dbReference>
<dbReference type="Pfam" id="PF02381">
    <property type="entry name" value="MraZ"/>
    <property type="match status" value="2"/>
</dbReference>
<dbReference type="SUPFAM" id="SSF89447">
    <property type="entry name" value="AbrB/MazE/MraZ-like"/>
    <property type="match status" value="1"/>
</dbReference>
<dbReference type="PROSITE" id="PS51740">
    <property type="entry name" value="SPOVT_ABRB"/>
    <property type="match status" value="2"/>
</dbReference>
<name>MRAZ_PSESM</name>
<reference key="1">
    <citation type="journal article" date="2003" name="Proc. Natl. Acad. Sci. U.S.A.">
        <title>The complete genome sequence of the Arabidopsis and tomato pathogen Pseudomonas syringae pv. tomato DC3000.</title>
        <authorList>
            <person name="Buell C.R."/>
            <person name="Joardar V."/>
            <person name="Lindeberg M."/>
            <person name="Selengut J."/>
            <person name="Paulsen I.T."/>
            <person name="Gwinn M.L."/>
            <person name="Dodson R.J."/>
            <person name="DeBoy R.T."/>
            <person name="Durkin A.S."/>
            <person name="Kolonay J.F."/>
            <person name="Madupu R."/>
            <person name="Daugherty S.C."/>
            <person name="Brinkac L.M."/>
            <person name="Beanan M.J."/>
            <person name="Haft D.H."/>
            <person name="Nelson W.C."/>
            <person name="Davidsen T.M."/>
            <person name="Zafar N."/>
            <person name="Zhou L."/>
            <person name="Liu J."/>
            <person name="Yuan Q."/>
            <person name="Khouri H.M."/>
            <person name="Fedorova N.B."/>
            <person name="Tran B."/>
            <person name="Russell D."/>
            <person name="Berry K.J."/>
            <person name="Utterback T.R."/>
            <person name="Van Aken S.E."/>
            <person name="Feldblyum T.V."/>
            <person name="D'Ascenzo M."/>
            <person name="Deng W.-L."/>
            <person name="Ramos A.R."/>
            <person name="Alfano J.R."/>
            <person name="Cartinhour S."/>
            <person name="Chatterjee A.K."/>
            <person name="Delaney T.P."/>
            <person name="Lazarowitz S.G."/>
            <person name="Martin G.B."/>
            <person name="Schneider D.J."/>
            <person name="Tang X."/>
            <person name="Bender C.L."/>
            <person name="White O."/>
            <person name="Fraser C.M."/>
            <person name="Collmer A."/>
        </authorList>
    </citation>
    <scope>NUCLEOTIDE SEQUENCE [LARGE SCALE GENOMIC DNA]</scope>
    <source>
        <strain>ATCC BAA-871 / DC3000</strain>
    </source>
</reference>
<feature type="chain" id="PRO_0000108523" description="Transcriptional regulator MraZ">
    <location>
        <begin position="1"/>
        <end position="151"/>
    </location>
</feature>
<feature type="domain" description="SpoVT-AbrB 1" evidence="2">
    <location>
        <begin position="5"/>
        <end position="52"/>
    </location>
</feature>
<feature type="domain" description="SpoVT-AbrB 2" evidence="2">
    <location>
        <begin position="81"/>
        <end position="124"/>
    </location>
</feature>
<protein>
    <recommendedName>
        <fullName>Transcriptional regulator MraZ</fullName>
    </recommendedName>
</protein>
<sequence>MFRGANAINLDAKGRLAMPSRYRDELDSRSAGQMIVTIDAVDPCLCLYPLSEWELIEAKLRDLATFREENRRLQRLLIGNAVDLELDGSGRFLVPPRLREYARLDKRVMLVGQLNKFQLWDEDAWNALADADLAAIQKPGAMPDELRDLIL</sequence>
<proteinExistence type="inferred from homology"/>
<evidence type="ECO:0000255" key="1">
    <source>
        <dbReference type="HAMAP-Rule" id="MF_01008"/>
    </source>
</evidence>
<evidence type="ECO:0000255" key="2">
    <source>
        <dbReference type="PROSITE-ProRule" id="PRU01076"/>
    </source>
</evidence>
<keyword id="KW-0963">Cytoplasm</keyword>
<keyword id="KW-0238">DNA-binding</keyword>
<keyword id="KW-1185">Reference proteome</keyword>
<keyword id="KW-0677">Repeat</keyword>
<keyword id="KW-0804">Transcription</keyword>
<keyword id="KW-0805">Transcription regulation</keyword>
<accession>Q87WX6</accession>
<comment type="subunit">
    <text evidence="1">Forms oligomers.</text>
</comment>
<comment type="subcellular location">
    <subcellularLocation>
        <location evidence="1">Cytoplasm</location>
        <location evidence="1">Nucleoid</location>
    </subcellularLocation>
</comment>
<comment type="similarity">
    <text evidence="1">Belongs to the MraZ family.</text>
</comment>